<evidence type="ECO:0000255" key="1">
    <source>
        <dbReference type="HAMAP-Rule" id="MF_00176"/>
    </source>
</evidence>
<organism>
    <name type="scientific">Bacillus cereus (strain B4264)</name>
    <dbReference type="NCBI Taxonomy" id="405532"/>
    <lineage>
        <taxon>Bacteria</taxon>
        <taxon>Bacillati</taxon>
        <taxon>Bacillota</taxon>
        <taxon>Bacilli</taxon>
        <taxon>Bacillales</taxon>
        <taxon>Bacillaceae</taxon>
        <taxon>Bacillus</taxon>
        <taxon>Bacillus cereus group</taxon>
    </lineage>
</organism>
<accession>B7HII5</accession>
<dbReference type="EC" id="6.1.1.11" evidence="1"/>
<dbReference type="EMBL" id="CP001176">
    <property type="protein sequence ID" value="ACK61623.1"/>
    <property type="molecule type" value="Genomic_DNA"/>
</dbReference>
<dbReference type="RefSeq" id="WP_000884187.1">
    <property type="nucleotide sequence ID" value="NZ_VEHB01000027.1"/>
</dbReference>
<dbReference type="SMR" id="B7HII5"/>
<dbReference type="KEGG" id="bcb:BCB4264_A0016"/>
<dbReference type="HOGENOM" id="CLU_023797_1_1_9"/>
<dbReference type="UniPathway" id="UPA00906">
    <property type="reaction ID" value="UER00895"/>
</dbReference>
<dbReference type="Proteomes" id="UP000007096">
    <property type="component" value="Chromosome"/>
</dbReference>
<dbReference type="GO" id="GO:0005737">
    <property type="term" value="C:cytoplasm"/>
    <property type="evidence" value="ECO:0007669"/>
    <property type="project" value="UniProtKB-SubCell"/>
</dbReference>
<dbReference type="GO" id="GO:0005524">
    <property type="term" value="F:ATP binding"/>
    <property type="evidence" value="ECO:0007669"/>
    <property type="project" value="UniProtKB-UniRule"/>
</dbReference>
<dbReference type="GO" id="GO:0140096">
    <property type="term" value="F:catalytic activity, acting on a protein"/>
    <property type="evidence" value="ECO:0007669"/>
    <property type="project" value="UniProtKB-ARBA"/>
</dbReference>
<dbReference type="GO" id="GO:0004828">
    <property type="term" value="F:serine-tRNA ligase activity"/>
    <property type="evidence" value="ECO:0007669"/>
    <property type="project" value="UniProtKB-UniRule"/>
</dbReference>
<dbReference type="GO" id="GO:0016740">
    <property type="term" value="F:transferase activity"/>
    <property type="evidence" value="ECO:0007669"/>
    <property type="project" value="UniProtKB-ARBA"/>
</dbReference>
<dbReference type="GO" id="GO:0016260">
    <property type="term" value="P:selenocysteine biosynthetic process"/>
    <property type="evidence" value="ECO:0007669"/>
    <property type="project" value="UniProtKB-UniRule"/>
</dbReference>
<dbReference type="GO" id="GO:0006434">
    <property type="term" value="P:seryl-tRNA aminoacylation"/>
    <property type="evidence" value="ECO:0007669"/>
    <property type="project" value="UniProtKB-UniRule"/>
</dbReference>
<dbReference type="CDD" id="cd00770">
    <property type="entry name" value="SerRS_core"/>
    <property type="match status" value="1"/>
</dbReference>
<dbReference type="Gene3D" id="3.30.930.10">
    <property type="entry name" value="Bira Bifunctional Protein, Domain 2"/>
    <property type="match status" value="1"/>
</dbReference>
<dbReference type="Gene3D" id="1.10.287.40">
    <property type="entry name" value="Serine-tRNA synthetase, tRNA binding domain"/>
    <property type="match status" value="1"/>
</dbReference>
<dbReference type="HAMAP" id="MF_00176">
    <property type="entry name" value="Ser_tRNA_synth_type1"/>
    <property type="match status" value="1"/>
</dbReference>
<dbReference type="InterPro" id="IPR002314">
    <property type="entry name" value="aa-tRNA-synt_IIb"/>
</dbReference>
<dbReference type="InterPro" id="IPR006195">
    <property type="entry name" value="aa-tRNA-synth_II"/>
</dbReference>
<dbReference type="InterPro" id="IPR045864">
    <property type="entry name" value="aa-tRNA-synth_II/BPL/LPL"/>
</dbReference>
<dbReference type="InterPro" id="IPR002317">
    <property type="entry name" value="Ser-tRNA-ligase_type_1"/>
</dbReference>
<dbReference type="InterPro" id="IPR015866">
    <property type="entry name" value="Ser-tRNA-synth_1_N"/>
</dbReference>
<dbReference type="InterPro" id="IPR042103">
    <property type="entry name" value="SerRS_1_N_sf"/>
</dbReference>
<dbReference type="InterPro" id="IPR033729">
    <property type="entry name" value="SerRS_core"/>
</dbReference>
<dbReference type="InterPro" id="IPR010978">
    <property type="entry name" value="tRNA-bd_arm"/>
</dbReference>
<dbReference type="NCBIfam" id="TIGR00414">
    <property type="entry name" value="serS"/>
    <property type="match status" value="1"/>
</dbReference>
<dbReference type="PANTHER" id="PTHR43697:SF1">
    <property type="entry name" value="SERINE--TRNA LIGASE"/>
    <property type="match status" value="1"/>
</dbReference>
<dbReference type="PANTHER" id="PTHR43697">
    <property type="entry name" value="SERYL-TRNA SYNTHETASE"/>
    <property type="match status" value="1"/>
</dbReference>
<dbReference type="Pfam" id="PF02403">
    <property type="entry name" value="Seryl_tRNA_N"/>
    <property type="match status" value="1"/>
</dbReference>
<dbReference type="Pfam" id="PF00587">
    <property type="entry name" value="tRNA-synt_2b"/>
    <property type="match status" value="1"/>
</dbReference>
<dbReference type="PIRSF" id="PIRSF001529">
    <property type="entry name" value="Ser-tRNA-synth_IIa"/>
    <property type="match status" value="1"/>
</dbReference>
<dbReference type="PRINTS" id="PR00981">
    <property type="entry name" value="TRNASYNTHSER"/>
</dbReference>
<dbReference type="SUPFAM" id="SSF55681">
    <property type="entry name" value="Class II aaRS and biotin synthetases"/>
    <property type="match status" value="1"/>
</dbReference>
<dbReference type="SUPFAM" id="SSF46589">
    <property type="entry name" value="tRNA-binding arm"/>
    <property type="match status" value="1"/>
</dbReference>
<dbReference type="PROSITE" id="PS50862">
    <property type="entry name" value="AA_TRNA_LIGASE_II"/>
    <property type="match status" value="1"/>
</dbReference>
<keyword id="KW-0030">Aminoacyl-tRNA synthetase</keyword>
<keyword id="KW-0067">ATP-binding</keyword>
<keyword id="KW-0963">Cytoplasm</keyword>
<keyword id="KW-0436">Ligase</keyword>
<keyword id="KW-0547">Nucleotide-binding</keyword>
<keyword id="KW-0648">Protein biosynthesis</keyword>
<name>SYS_BACC4</name>
<comment type="function">
    <text evidence="1">Catalyzes the attachment of serine to tRNA(Ser). Is also able to aminoacylate tRNA(Sec) with serine, to form the misacylated tRNA L-seryl-tRNA(Sec), which will be further converted into selenocysteinyl-tRNA(Sec).</text>
</comment>
<comment type="catalytic activity">
    <reaction evidence="1">
        <text>tRNA(Ser) + L-serine + ATP = L-seryl-tRNA(Ser) + AMP + diphosphate + H(+)</text>
        <dbReference type="Rhea" id="RHEA:12292"/>
        <dbReference type="Rhea" id="RHEA-COMP:9669"/>
        <dbReference type="Rhea" id="RHEA-COMP:9703"/>
        <dbReference type="ChEBI" id="CHEBI:15378"/>
        <dbReference type="ChEBI" id="CHEBI:30616"/>
        <dbReference type="ChEBI" id="CHEBI:33019"/>
        <dbReference type="ChEBI" id="CHEBI:33384"/>
        <dbReference type="ChEBI" id="CHEBI:78442"/>
        <dbReference type="ChEBI" id="CHEBI:78533"/>
        <dbReference type="ChEBI" id="CHEBI:456215"/>
        <dbReference type="EC" id="6.1.1.11"/>
    </reaction>
</comment>
<comment type="catalytic activity">
    <reaction evidence="1">
        <text>tRNA(Sec) + L-serine + ATP = L-seryl-tRNA(Sec) + AMP + diphosphate + H(+)</text>
        <dbReference type="Rhea" id="RHEA:42580"/>
        <dbReference type="Rhea" id="RHEA-COMP:9742"/>
        <dbReference type="Rhea" id="RHEA-COMP:10128"/>
        <dbReference type="ChEBI" id="CHEBI:15378"/>
        <dbReference type="ChEBI" id="CHEBI:30616"/>
        <dbReference type="ChEBI" id="CHEBI:33019"/>
        <dbReference type="ChEBI" id="CHEBI:33384"/>
        <dbReference type="ChEBI" id="CHEBI:78442"/>
        <dbReference type="ChEBI" id="CHEBI:78533"/>
        <dbReference type="ChEBI" id="CHEBI:456215"/>
        <dbReference type="EC" id="6.1.1.11"/>
    </reaction>
</comment>
<comment type="pathway">
    <text evidence="1">Aminoacyl-tRNA biosynthesis; selenocysteinyl-tRNA(Sec) biosynthesis; L-seryl-tRNA(Sec) from L-serine and tRNA(Sec): step 1/1.</text>
</comment>
<comment type="subunit">
    <text evidence="1">Homodimer. The tRNA molecule binds across the dimer.</text>
</comment>
<comment type="subcellular location">
    <subcellularLocation>
        <location evidence="1">Cytoplasm</location>
    </subcellularLocation>
</comment>
<comment type="domain">
    <text evidence="1">Consists of two distinct domains, a catalytic core and a N-terminal extension that is involved in tRNA binding.</text>
</comment>
<comment type="similarity">
    <text evidence="1">Belongs to the class-II aminoacyl-tRNA synthetase family. Type-1 seryl-tRNA synthetase subfamily.</text>
</comment>
<feature type="chain" id="PRO_1000199465" description="Serine--tRNA ligase">
    <location>
        <begin position="1"/>
        <end position="424"/>
    </location>
</feature>
<feature type="binding site" evidence="1">
    <location>
        <begin position="231"/>
        <end position="233"/>
    </location>
    <ligand>
        <name>L-serine</name>
        <dbReference type="ChEBI" id="CHEBI:33384"/>
    </ligand>
</feature>
<feature type="binding site" evidence="1">
    <location>
        <begin position="262"/>
        <end position="264"/>
    </location>
    <ligand>
        <name>ATP</name>
        <dbReference type="ChEBI" id="CHEBI:30616"/>
    </ligand>
</feature>
<feature type="binding site" evidence="1">
    <location>
        <position position="285"/>
    </location>
    <ligand>
        <name>L-serine</name>
        <dbReference type="ChEBI" id="CHEBI:33384"/>
    </ligand>
</feature>
<feature type="binding site" evidence="1">
    <location>
        <begin position="349"/>
        <end position="352"/>
    </location>
    <ligand>
        <name>ATP</name>
        <dbReference type="ChEBI" id="CHEBI:30616"/>
    </ligand>
</feature>
<feature type="binding site" evidence="1">
    <location>
        <position position="385"/>
    </location>
    <ligand>
        <name>L-serine</name>
        <dbReference type="ChEBI" id="CHEBI:33384"/>
    </ligand>
</feature>
<gene>
    <name evidence="1" type="primary">serS</name>
    <name type="ordered locus">BCB4264_A0016</name>
</gene>
<reference key="1">
    <citation type="submission" date="2008-10" db="EMBL/GenBank/DDBJ databases">
        <title>Genome sequence of Bacillus cereus B4264.</title>
        <authorList>
            <person name="Dodson R.J."/>
            <person name="Durkin A.S."/>
            <person name="Rosovitz M.J."/>
            <person name="Rasko D.A."/>
            <person name="Hoffmaster A."/>
            <person name="Ravel J."/>
            <person name="Sutton G."/>
        </authorList>
    </citation>
    <scope>NUCLEOTIDE SEQUENCE [LARGE SCALE GENOMIC DNA]</scope>
    <source>
        <strain>B4264</strain>
    </source>
</reference>
<proteinExistence type="inferred from homology"/>
<sequence>MLDIKFLRTNFEEVKAKLQHRGEDLTDFGRFEELDTRRRELLVQTEELKSKRNEVSQQISVLKREKKDAEALILEMREVGEKVKDLDNELRTVEEDLERLMLSIPNIPHESAPVGETEDDNVVARTWGEVKEFTYEPKPHWDLATDLGILDFERAGKVTGSRFVFYKGAGARLERALISFMLDLHTDEHGYEEVLPPYMVNRASMTGTGQLPKFEEDAFRIESEDYFLIPTAEVPVTNMHRDEILNKEQLPIRYAAFSSCFRSEAGSAGRDTRGLIRQHQFNKVELVKFVKPEDSYEELEKLTNDAERVLQLLELPYRVMSMCTGDLGFTAAKKYDIEVWIPSYGTYREISSCSNFEAFQARRANIRFRREPNGKPEHVHTLNGSGLAIGRTVAAILENYQQEDGTIIIPEVLRPYMGGKTVIK</sequence>
<protein>
    <recommendedName>
        <fullName evidence="1">Serine--tRNA ligase</fullName>
        <ecNumber evidence="1">6.1.1.11</ecNumber>
    </recommendedName>
    <alternativeName>
        <fullName evidence="1">Seryl-tRNA synthetase</fullName>
        <shortName evidence="1">SerRS</shortName>
    </alternativeName>
    <alternativeName>
        <fullName evidence="1">Seryl-tRNA(Ser/Sec) synthetase</fullName>
    </alternativeName>
</protein>